<name>NUOA_BURP6</name>
<protein>
    <recommendedName>
        <fullName evidence="1">NADH-quinone oxidoreductase subunit A</fullName>
        <ecNumber evidence="1">7.1.1.-</ecNumber>
    </recommendedName>
    <alternativeName>
        <fullName evidence="1">NADH dehydrogenase I subunit A</fullName>
    </alternativeName>
    <alternativeName>
        <fullName evidence="1">NDH-1 subunit A</fullName>
    </alternativeName>
    <alternativeName>
        <fullName evidence="1">NUO1</fullName>
    </alternativeName>
</protein>
<evidence type="ECO:0000255" key="1">
    <source>
        <dbReference type="HAMAP-Rule" id="MF_01394"/>
    </source>
</evidence>
<comment type="function">
    <text evidence="1">NDH-1 shuttles electrons from NADH, via FMN and iron-sulfur (Fe-S) centers, to quinones in the respiratory chain. The immediate electron acceptor for the enzyme in this species is believed to be ubiquinone. Couples the redox reaction to proton translocation (for every two electrons transferred, four hydrogen ions are translocated across the cytoplasmic membrane), and thus conserves the redox energy in a proton gradient.</text>
</comment>
<comment type="catalytic activity">
    <reaction evidence="1">
        <text>a quinone + NADH + 5 H(+)(in) = a quinol + NAD(+) + 4 H(+)(out)</text>
        <dbReference type="Rhea" id="RHEA:57888"/>
        <dbReference type="ChEBI" id="CHEBI:15378"/>
        <dbReference type="ChEBI" id="CHEBI:24646"/>
        <dbReference type="ChEBI" id="CHEBI:57540"/>
        <dbReference type="ChEBI" id="CHEBI:57945"/>
        <dbReference type="ChEBI" id="CHEBI:132124"/>
    </reaction>
</comment>
<comment type="subunit">
    <text evidence="1">NDH-1 is composed of 14 different subunits. Subunits NuoA, H, J, K, L, M, N constitute the membrane sector of the complex.</text>
</comment>
<comment type="subcellular location">
    <subcellularLocation>
        <location evidence="1">Cell inner membrane</location>
        <topology evidence="1">Multi-pass membrane protein</topology>
    </subcellularLocation>
</comment>
<comment type="similarity">
    <text evidence="1">Belongs to the complex I subunit 3 family.</text>
</comment>
<reference key="1">
    <citation type="journal article" date="2010" name="Genome Biol. Evol.">
        <title>Continuing evolution of Burkholderia mallei through genome reduction and large-scale rearrangements.</title>
        <authorList>
            <person name="Losada L."/>
            <person name="Ronning C.M."/>
            <person name="DeShazer D."/>
            <person name="Woods D."/>
            <person name="Fedorova N."/>
            <person name="Kim H.S."/>
            <person name="Shabalina S.A."/>
            <person name="Pearson T.R."/>
            <person name="Brinkac L."/>
            <person name="Tan P."/>
            <person name="Nandi T."/>
            <person name="Crabtree J."/>
            <person name="Badger J."/>
            <person name="Beckstrom-Sternberg S."/>
            <person name="Saqib M."/>
            <person name="Schutzer S.E."/>
            <person name="Keim P."/>
            <person name="Nierman W.C."/>
        </authorList>
    </citation>
    <scope>NUCLEOTIDE SEQUENCE [LARGE SCALE GENOMIC DNA]</scope>
    <source>
        <strain>668</strain>
    </source>
</reference>
<keyword id="KW-0997">Cell inner membrane</keyword>
<keyword id="KW-1003">Cell membrane</keyword>
<keyword id="KW-0472">Membrane</keyword>
<keyword id="KW-0520">NAD</keyword>
<keyword id="KW-0874">Quinone</keyword>
<keyword id="KW-1278">Translocase</keyword>
<keyword id="KW-0812">Transmembrane</keyword>
<keyword id="KW-1133">Transmembrane helix</keyword>
<keyword id="KW-0813">Transport</keyword>
<keyword id="KW-0830">Ubiquinone</keyword>
<sequence>MNLAAYYPVLLFLLVGTGLGIALVSIGKILGPNKPDSEKNAPYECGFEAFEDARMKFDVRYYLVAILFIIFDLETAFLFPWGVALREIGWPGFIAMMIFLLEFLLGFAYIWKKGGLDWE</sequence>
<organism>
    <name type="scientific">Burkholderia pseudomallei (strain 668)</name>
    <dbReference type="NCBI Taxonomy" id="320373"/>
    <lineage>
        <taxon>Bacteria</taxon>
        <taxon>Pseudomonadati</taxon>
        <taxon>Pseudomonadota</taxon>
        <taxon>Betaproteobacteria</taxon>
        <taxon>Burkholderiales</taxon>
        <taxon>Burkholderiaceae</taxon>
        <taxon>Burkholderia</taxon>
        <taxon>pseudomallei group</taxon>
    </lineage>
</organism>
<feature type="chain" id="PRO_0000362648" description="NADH-quinone oxidoreductase subunit A">
    <location>
        <begin position="1"/>
        <end position="119"/>
    </location>
</feature>
<feature type="transmembrane region" description="Helical" evidence="1">
    <location>
        <begin position="7"/>
        <end position="27"/>
    </location>
</feature>
<feature type="transmembrane region" description="Helical" evidence="1">
    <location>
        <begin position="63"/>
        <end position="83"/>
    </location>
</feature>
<feature type="transmembrane region" description="Helical" evidence="1">
    <location>
        <begin position="88"/>
        <end position="108"/>
    </location>
</feature>
<dbReference type="EC" id="7.1.1.-" evidence="1"/>
<dbReference type="EMBL" id="CP000570">
    <property type="protein sequence ID" value="ABN81517.1"/>
    <property type="molecule type" value="Genomic_DNA"/>
</dbReference>
<dbReference type="RefSeq" id="WP_004186624.1">
    <property type="nucleotide sequence ID" value="NC_009074.1"/>
</dbReference>
<dbReference type="SMR" id="A3N7L7"/>
<dbReference type="KEGG" id="bpd:BURPS668_1290"/>
<dbReference type="HOGENOM" id="CLU_119549_3_1_4"/>
<dbReference type="GO" id="GO:0030964">
    <property type="term" value="C:NADH dehydrogenase complex"/>
    <property type="evidence" value="ECO:0007669"/>
    <property type="project" value="TreeGrafter"/>
</dbReference>
<dbReference type="GO" id="GO:0005886">
    <property type="term" value="C:plasma membrane"/>
    <property type="evidence" value="ECO:0007669"/>
    <property type="project" value="UniProtKB-SubCell"/>
</dbReference>
<dbReference type="GO" id="GO:0008137">
    <property type="term" value="F:NADH dehydrogenase (ubiquinone) activity"/>
    <property type="evidence" value="ECO:0007669"/>
    <property type="project" value="InterPro"/>
</dbReference>
<dbReference type="GO" id="GO:0050136">
    <property type="term" value="F:NADH:ubiquinone reductase (non-electrogenic) activity"/>
    <property type="evidence" value="ECO:0007669"/>
    <property type="project" value="UniProtKB-UniRule"/>
</dbReference>
<dbReference type="GO" id="GO:0048038">
    <property type="term" value="F:quinone binding"/>
    <property type="evidence" value="ECO:0007669"/>
    <property type="project" value="UniProtKB-KW"/>
</dbReference>
<dbReference type="FunFam" id="1.20.58.1610:FF:000004">
    <property type="entry name" value="NADH-quinone oxidoreductase subunit A"/>
    <property type="match status" value="1"/>
</dbReference>
<dbReference type="Gene3D" id="1.20.58.1610">
    <property type="entry name" value="NADH:ubiquinone/plastoquinone oxidoreductase, chain 3"/>
    <property type="match status" value="1"/>
</dbReference>
<dbReference type="HAMAP" id="MF_01394">
    <property type="entry name" value="NDH1_NuoA"/>
    <property type="match status" value="1"/>
</dbReference>
<dbReference type="InterPro" id="IPR023043">
    <property type="entry name" value="NAD(P)H_OxRDtase_bac/plastid"/>
</dbReference>
<dbReference type="InterPro" id="IPR000440">
    <property type="entry name" value="NADH_UbQ/plastoQ_OxRdtase_su3"/>
</dbReference>
<dbReference type="InterPro" id="IPR038430">
    <property type="entry name" value="NDAH_ubi_oxred_su3_sf"/>
</dbReference>
<dbReference type="PANTHER" id="PTHR11058">
    <property type="entry name" value="NADH-UBIQUINONE OXIDOREDUCTASE CHAIN 3"/>
    <property type="match status" value="1"/>
</dbReference>
<dbReference type="PANTHER" id="PTHR11058:SF9">
    <property type="entry name" value="NADH-UBIQUINONE OXIDOREDUCTASE CHAIN 3"/>
    <property type="match status" value="1"/>
</dbReference>
<dbReference type="Pfam" id="PF00507">
    <property type="entry name" value="Oxidored_q4"/>
    <property type="match status" value="1"/>
</dbReference>
<accession>A3N7L7</accession>
<gene>
    <name evidence="1" type="primary">nuoA</name>
    <name type="ordered locus">BURPS668_1290</name>
</gene>
<proteinExistence type="inferred from homology"/>